<dbReference type="EC" id="2.4.2.9" evidence="1"/>
<dbReference type="EMBL" id="CP000903">
    <property type="protein sequence ID" value="ABY46259.1"/>
    <property type="molecule type" value="Genomic_DNA"/>
</dbReference>
<dbReference type="RefSeq" id="WP_000517533.1">
    <property type="nucleotide sequence ID" value="NC_010184.1"/>
</dbReference>
<dbReference type="SMR" id="A9VSB3"/>
<dbReference type="GeneID" id="66265129"/>
<dbReference type="KEGG" id="bwe:BcerKBAB4_5113"/>
<dbReference type="eggNOG" id="COG0035">
    <property type="taxonomic scope" value="Bacteria"/>
</dbReference>
<dbReference type="HOGENOM" id="CLU_067096_2_2_9"/>
<dbReference type="UniPathway" id="UPA00574">
    <property type="reaction ID" value="UER00636"/>
</dbReference>
<dbReference type="Proteomes" id="UP000002154">
    <property type="component" value="Chromosome"/>
</dbReference>
<dbReference type="GO" id="GO:0005525">
    <property type="term" value="F:GTP binding"/>
    <property type="evidence" value="ECO:0007669"/>
    <property type="project" value="UniProtKB-KW"/>
</dbReference>
<dbReference type="GO" id="GO:0000287">
    <property type="term" value="F:magnesium ion binding"/>
    <property type="evidence" value="ECO:0007669"/>
    <property type="project" value="UniProtKB-UniRule"/>
</dbReference>
<dbReference type="GO" id="GO:0004845">
    <property type="term" value="F:uracil phosphoribosyltransferase activity"/>
    <property type="evidence" value="ECO:0007669"/>
    <property type="project" value="UniProtKB-UniRule"/>
</dbReference>
<dbReference type="GO" id="GO:0044206">
    <property type="term" value="P:UMP salvage"/>
    <property type="evidence" value="ECO:0007669"/>
    <property type="project" value="UniProtKB-UniRule"/>
</dbReference>
<dbReference type="GO" id="GO:0006223">
    <property type="term" value="P:uracil salvage"/>
    <property type="evidence" value="ECO:0007669"/>
    <property type="project" value="InterPro"/>
</dbReference>
<dbReference type="CDD" id="cd06223">
    <property type="entry name" value="PRTases_typeI"/>
    <property type="match status" value="1"/>
</dbReference>
<dbReference type="FunFam" id="3.40.50.2020:FF:000003">
    <property type="entry name" value="Uracil phosphoribosyltransferase"/>
    <property type="match status" value="1"/>
</dbReference>
<dbReference type="Gene3D" id="3.40.50.2020">
    <property type="match status" value="1"/>
</dbReference>
<dbReference type="HAMAP" id="MF_01218_B">
    <property type="entry name" value="Upp_B"/>
    <property type="match status" value="1"/>
</dbReference>
<dbReference type="InterPro" id="IPR000836">
    <property type="entry name" value="PRibTrfase_dom"/>
</dbReference>
<dbReference type="InterPro" id="IPR029057">
    <property type="entry name" value="PRTase-like"/>
</dbReference>
<dbReference type="InterPro" id="IPR034332">
    <property type="entry name" value="Upp_B"/>
</dbReference>
<dbReference type="InterPro" id="IPR050054">
    <property type="entry name" value="UPRTase/APRTase"/>
</dbReference>
<dbReference type="InterPro" id="IPR005765">
    <property type="entry name" value="Ura_phspho_trans"/>
</dbReference>
<dbReference type="NCBIfam" id="NF001097">
    <property type="entry name" value="PRK00129.1"/>
    <property type="match status" value="1"/>
</dbReference>
<dbReference type="NCBIfam" id="TIGR01091">
    <property type="entry name" value="upp"/>
    <property type="match status" value="1"/>
</dbReference>
<dbReference type="PANTHER" id="PTHR32315">
    <property type="entry name" value="ADENINE PHOSPHORIBOSYLTRANSFERASE"/>
    <property type="match status" value="1"/>
</dbReference>
<dbReference type="PANTHER" id="PTHR32315:SF4">
    <property type="entry name" value="URACIL PHOSPHORIBOSYLTRANSFERASE, CHLOROPLASTIC"/>
    <property type="match status" value="1"/>
</dbReference>
<dbReference type="Pfam" id="PF14681">
    <property type="entry name" value="UPRTase"/>
    <property type="match status" value="1"/>
</dbReference>
<dbReference type="SUPFAM" id="SSF53271">
    <property type="entry name" value="PRTase-like"/>
    <property type="match status" value="1"/>
</dbReference>
<protein>
    <recommendedName>
        <fullName evidence="1">Uracil phosphoribosyltransferase</fullName>
        <ecNumber evidence="1">2.4.2.9</ecNumber>
    </recommendedName>
    <alternativeName>
        <fullName evidence="1">UMP pyrophosphorylase</fullName>
    </alternativeName>
    <alternativeName>
        <fullName evidence="1">UPRTase</fullName>
    </alternativeName>
</protein>
<organism>
    <name type="scientific">Bacillus mycoides (strain KBAB4)</name>
    <name type="common">Bacillus weihenstephanensis</name>
    <dbReference type="NCBI Taxonomy" id="315730"/>
    <lineage>
        <taxon>Bacteria</taxon>
        <taxon>Bacillati</taxon>
        <taxon>Bacillota</taxon>
        <taxon>Bacilli</taxon>
        <taxon>Bacillales</taxon>
        <taxon>Bacillaceae</taxon>
        <taxon>Bacillus</taxon>
        <taxon>Bacillus cereus group</taxon>
    </lineage>
</organism>
<feature type="chain" id="PRO_1000139097" description="Uracil phosphoribosyltransferase">
    <location>
        <begin position="1"/>
        <end position="209"/>
    </location>
</feature>
<feature type="binding site" evidence="1">
    <location>
        <position position="79"/>
    </location>
    <ligand>
        <name>5-phospho-alpha-D-ribose 1-diphosphate</name>
        <dbReference type="ChEBI" id="CHEBI:58017"/>
    </ligand>
</feature>
<feature type="binding site" evidence="1">
    <location>
        <position position="104"/>
    </location>
    <ligand>
        <name>5-phospho-alpha-D-ribose 1-diphosphate</name>
        <dbReference type="ChEBI" id="CHEBI:58017"/>
    </ligand>
</feature>
<feature type="binding site" evidence="1">
    <location>
        <begin position="131"/>
        <end position="139"/>
    </location>
    <ligand>
        <name>5-phospho-alpha-D-ribose 1-diphosphate</name>
        <dbReference type="ChEBI" id="CHEBI:58017"/>
    </ligand>
</feature>
<feature type="binding site" evidence="1">
    <location>
        <position position="194"/>
    </location>
    <ligand>
        <name>uracil</name>
        <dbReference type="ChEBI" id="CHEBI:17568"/>
    </ligand>
</feature>
<feature type="binding site" evidence="1">
    <location>
        <begin position="199"/>
        <end position="201"/>
    </location>
    <ligand>
        <name>uracil</name>
        <dbReference type="ChEBI" id="CHEBI:17568"/>
    </ligand>
</feature>
<feature type="binding site" evidence="1">
    <location>
        <position position="200"/>
    </location>
    <ligand>
        <name>5-phospho-alpha-D-ribose 1-diphosphate</name>
        <dbReference type="ChEBI" id="CHEBI:58017"/>
    </ligand>
</feature>
<evidence type="ECO:0000255" key="1">
    <source>
        <dbReference type="HAMAP-Rule" id="MF_01218"/>
    </source>
</evidence>
<reference key="1">
    <citation type="journal article" date="2008" name="Chem. Biol. Interact.">
        <title>Extending the Bacillus cereus group genomics to putative food-borne pathogens of different toxicity.</title>
        <authorList>
            <person name="Lapidus A."/>
            <person name="Goltsman E."/>
            <person name="Auger S."/>
            <person name="Galleron N."/>
            <person name="Segurens B."/>
            <person name="Dossat C."/>
            <person name="Land M.L."/>
            <person name="Broussolle V."/>
            <person name="Brillard J."/>
            <person name="Guinebretiere M.-H."/>
            <person name="Sanchis V."/>
            <person name="Nguen-the C."/>
            <person name="Lereclus D."/>
            <person name="Richardson P."/>
            <person name="Wincker P."/>
            <person name="Weissenbach J."/>
            <person name="Ehrlich S.D."/>
            <person name="Sorokin A."/>
        </authorList>
    </citation>
    <scope>NUCLEOTIDE SEQUENCE [LARGE SCALE GENOMIC DNA]</scope>
    <source>
        <strain>KBAB4</strain>
    </source>
</reference>
<proteinExistence type="inferred from homology"/>
<comment type="function">
    <text evidence="1">Catalyzes the conversion of uracil and 5-phospho-alpha-D-ribose 1-diphosphate (PRPP) to UMP and diphosphate.</text>
</comment>
<comment type="catalytic activity">
    <reaction evidence="1">
        <text>UMP + diphosphate = 5-phospho-alpha-D-ribose 1-diphosphate + uracil</text>
        <dbReference type="Rhea" id="RHEA:13017"/>
        <dbReference type="ChEBI" id="CHEBI:17568"/>
        <dbReference type="ChEBI" id="CHEBI:33019"/>
        <dbReference type="ChEBI" id="CHEBI:57865"/>
        <dbReference type="ChEBI" id="CHEBI:58017"/>
        <dbReference type="EC" id="2.4.2.9"/>
    </reaction>
</comment>
<comment type="cofactor">
    <cofactor evidence="1">
        <name>Mg(2+)</name>
        <dbReference type="ChEBI" id="CHEBI:18420"/>
    </cofactor>
    <text evidence="1">Binds 1 Mg(2+) ion per subunit. The magnesium is bound as Mg-PRPP.</text>
</comment>
<comment type="activity regulation">
    <text evidence="1">Allosterically activated by GTP.</text>
</comment>
<comment type="pathway">
    <text evidence="1">Pyrimidine metabolism; UMP biosynthesis via salvage pathway; UMP from uracil: step 1/1.</text>
</comment>
<comment type="similarity">
    <text evidence="1">Belongs to the UPRTase family.</text>
</comment>
<name>UPP_BACMK</name>
<keyword id="KW-0021">Allosteric enzyme</keyword>
<keyword id="KW-0328">Glycosyltransferase</keyword>
<keyword id="KW-0342">GTP-binding</keyword>
<keyword id="KW-0460">Magnesium</keyword>
<keyword id="KW-0547">Nucleotide-binding</keyword>
<keyword id="KW-0808">Transferase</keyword>
<gene>
    <name evidence="1" type="primary">upp</name>
    <name type="ordered locus">BcerKBAB4_5113</name>
</gene>
<accession>A9VSB3</accession>
<sequence length="209" mass="22902">MGKLYVFDHPLIQHKITYIRDKNTGTKDFRELVDEVASLMAFEITRDLPLEDIEIETPVSKATTKVIAGKKLGLIPILRAGLGMVDGILKLIPAAKVGHVGLYRDPKTLQPVEYYVKLPTDVEERDFIVLDPMLATGGSAAEAINSLKKRGAKQIKLMCIVAAPEGVKVVQEEHPDVDIYVAALDEKLNDHGYVVPGLGDAGDRLFGTK</sequence>